<gene>
    <name type="primary">SSN3</name>
    <name type="synonym">CDK8</name>
    <name type="ordered locus">CNBM0820</name>
</gene>
<protein>
    <recommendedName>
        <fullName>Serine/threonine-protein kinase SSN3</fullName>
        <ecNumber>2.7.11.22</ecNumber>
        <ecNumber>2.7.11.23</ecNumber>
    </recommendedName>
    <alternativeName>
        <fullName>Cyclin-dependent kinase 8</fullName>
    </alternativeName>
</protein>
<proteinExistence type="inferred from homology"/>
<reference key="1">
    <citation type="journal article" date="2005" name="Science">
        <title>The genome of the basidiomycetous yeast and human pathogen Cryptococcus neoformans.</title>
        <authorList>
            <person name="Loftus B.J."/>
            <person name="Fung E."/>
            <person name="Roncaglia P."/>
            <person name="Rowley D."/>
            <person name="Amedeo P."/>
            <person name="Bruno D."/>
            <person name="Vamathevan J."/>
            <person name="Miranda M."/>
            <person name="Anderson I.J."/>
            <person name="Fraser J.A."/>
            <person name="Allen J.E."/>
            <person name="Bosdet I.E."/>
            <person name="Brent M.R."/>
            <person name="Chiu R."/>
            <person name="Doering T.L."/>
            <person name="Donlin M.J."/>
            <person name="D'Souza C.A."/>
            <person name="Fox D.S."/>
            <person name="Grinberg V."/>
            <person name="Fu J."/>
            <person name="Fukushima M."/>
            <person name="Haas B.J."/>
            <person name="Huang J.C."/>
            <person name="Janbon G."/>
            <person name="Jones S.J.M."/>
            <person name="Koo H.L."/>
            <person name="Krzywinski M.I."/>
            <person name="Kwon-Chung K.J."/>
            <person name="Lengeler K.B."/>
            <person name="Maiti R."/>
            <person name="Marra M.A."/>
            <person name="Marra R.E."/>
            <person name="Mathewson C.A."/>
            <person name="Mitchell T.G."/>
            <person name="Pertea M."/>
            <person name="Riggs F.R."/>
            <person name="Salzberg S.L."/>
            <person name="Schein J.E."/>
            <person name="Shvartsbeyn A."/>
            <person name="Shin H."/>
            <person name="Shumway M."/>
            <person name="Specht C.A."/>
            <person name="Suh B.B."/>
            <person name="Tenney A."/>
            <person name="Utterback T.R."/>
            <person name="Wickes B.L."/>
            <person name="Wortman J.R."/>
            <person name="Wye N.H."/>
            <person name="Kronstad J.W."/>
            <person name="Lodge J.K."/>
            <person name="Heitman J."/>
            <person name="Davis R.W."/>
            <person name="Fraser C.M."/>
            <person name="Hyman R.W."/>
        </authorList>
    </citation>
    <scope>NUCLEOTIDE SEQUENCE [LARGE SCALE GENOMIC DNA]</scope>
    <source>
        <strain>B-3501A</strain>
    </source>
</reference>
<name>SSN3_CRYNB</name>
<keyword id="KW-0010">Activator</keyword>
<keyword id="KW-0067">ATP-binding</keyword>
<keyword id="KW-0418">Kinase</keyword>
<keyword id="KW-0460">Magnesium</keyword>
<keyword id="KW-0479">Metal-binding</keyword>
<keyword id="KW-0547">Nucleotide-binding</keyword>
<keyword id="KW-0539">Nucleus</keyword>
<keyword id="KW-0678">Repressor</keyword>
<keyword id="KW-0723">Serine/threonine-protein kinase</keyword>
<keyword id="KW-0804">Transcription</keyword>
<keyword id="KW-0805">Transcription regulation</keyword>
<keyword id="KW-0808">Transferase</keyword>
<evidence type="ECO:0000250" key="1"/>
<evidence type="ECO:0000255" key="2">
    <source>
        <dbReference type="PROSITE-ProRule" id="PRU00159"/>
    </source>
</evidence>
<evidence type="ECO:0000255" key="3">
    <source>
        <dbReference type="PROSITE-ProRule" id="PRU10027"/>
    </source>
</evidence>
<evidence type="ECO:0000256" key="4">
    <source>
        <dbReference type="SAM" id="MobiDB-lite"/>
    </source>
</evidence>
<evidence type="ECO:0000305" key="5"/>
<dbReference type="EC" id="2.7.11.22"/>
<dbReference type="EC" id="2.7.11.23"/>
<dbReference type="EMBL" id="AAEY01000062">
    <property type="protein sequence ID" value="EAL17515.1"/>
    <property type="molecule type" value="Genomic_DNA"/>
</dbReference>
<dbReference type="RefSeq" id="XP_772162.1">
    <property type="nucleotide sequence ID" value="XM_767069.1"/>
</dbReference>
<dbReference type="SMR" id="P0CS77"/>
<dbReference type="EnsemblFungi" id="AAW46899">
    <property type="protein sequence ID" value="AAW46899"/>
    <property type="gene ID" value="CNM00930"/>
</dbReference>
<dbReference type="GeneID" id="4939442"/>
<dbReference type="KEGG" id="cnb:CNBM0820"/>
<dbReference type="VEuPathDB" id="FungiDB:CNBM0820"/>
<dbReference type="HOGENOM" id="CLU_000288_181_6_1"/>
<dbReference type="OrthoDB" id="942at5206"/>
<dbReference type="GO" id="GO:1990508">
    <property type="term" value="C:CKM complex"/>
    <property type="evidence" value="ECO:0007669"/>
    <property type="project" value="EnsemblFungi"/>
</dbReference>
<dbReference type="GO" id="GO:0016592">
    <property type="term" value="C:mediator complex"/>
    <property type="evidence" value="ECO:0007669"/>
    <property type="project" value="EnsemblFungi"/>
</dbReference>
<dbReference type="GO" id="GO:0005524">
    <property type="term" value="F:ATP binding"/>
    <property type="evidence" value="ECO:0007669"/>
    <property type="project" value="UniProtKB-KW"/>
</dbReference>
<dbReference type="GO" id="GO:0004693">
    <property type="term" value="F:cyclin-dependent protein serine/threonine kinase activity"/>
    <property type="evidence" value="ECO:0007669"/>
    <property type="project" value="UniProtKB-EC"/>
</dbReference>
<dbReference type="GO" id="GO:0046872">
    <property type="term" value="F:metal ion binding"/>
    <property type="evidence" value="ECO:0007669"/>
    <property type="project" value="UniProtKB-KW"/>
</dbReference>
<dbReference type="GO" id="GO:0106310">
    <property type="term" value="F:protein serine kinase activity"/>
    <property type="evidence" value="ECO:0007669"/>
    <property type="project" value="RHEA"/>
</dbReference>
<dbReference type="GO" id="GO:0008353">
    <property type="term" value="F:RNA polymerase II CTD heptapeptide repeat kinase activity"/>
    <property type="evidence" value="ECO:0007669"/>
    <property type="project" value="UniProtKB-EC"/>
</dbReference>
<dbReference type="GO" id="GO:0060258">
    <property type="term" value="P:negative regulation of filamentous growth"/>
    <property type="evidence" value="ECO:0007669"/>
    <property type="project" value="EnsemblFungi"/>
</dbReference>
<dbReference type="GO" id="GO:0000122">
    <property type="term" value="P:negative regulation of transcription by RNA polymerase II"/>
    <property type="evidence" value="ECO:0007669"/>
    <property type="project" value="EnsemblFungi"/>
</dbReference>
<dbReference type="GO" id="GO:0070481">
    <property type="term" value="P:nuclear-transcribed mRNA catabolic process, non-stop decay"/>
    <property type="evidence" value="ECO:0007669"/>
    <property type="project" value="EnsemblFungi"/>
</dbReference>
<dbReference type="GO" id="GO:0045944">
    <property type="term" value="P:positive regulation of transcription by RNA polymerase II"/>
    <property type="evidence" value="ECO:0007669"/>
    <property type="project" value="EnsemblFungi"/>
</dbReference>
<dbReference type="GO" id="GO:0031648">
    <property type="term" value="P:protein destabilization"/>
    <property type="evidence" value="ECO:0007669"/>
    <property type="project" value="EnsemblFungi"/>
</dbReference>
<dbReference type="CDD" id="cd07842">
    <property type="entry name" value="STKc_CDK8_like"/>
    <property type="match status" value="1"/>
</dbReference>
<dbReference type="FunFam" id="1.10.510.10:FF:000408">
    <property type="entry name" value="Serine/threonine-protein kinase SSN3"/>
    <property type="match status" value="1"/>
</dbReference>
<dbReference type="FunFam" id="3.30.200.20:FF:000757">
    <property type="entry name" value="Serine/threonine-protein kinase SSN3"/>
    <property type="match status" value="1"/>
</dbReference>
<dbReference type="Gene3D" id="3.30.200.20">
    <property type="entry name" value="Phosphorylase Kinase, domain 1"/>
    <property type="match status" value="1"/>
</dbReference>
<dbReference type="Gene3D" id="1.10.510.10">
    <property type="entry name" value="Transferase(Phosphotransferase) domain 1"/>
    <property type="match status" value="1"/>
</dbReference>
<dbReference type="InterPro" id="IPR050108">
    <property type="entry name" value="CDK"/>
</dbReference>
<dbReference type="InterPro" id="IPR011009">
    <property type="entry name" value="Kinase-like_dom_sf"/>
</dbReference>
<dbReference type="InterPro" id="IPR000719">
    <property type="entry name" value="Prot_kinase_dom"/>
</dbReference>
<dbReference type="InterPro" id="IPR008271">
    <property type="entry name" value="Ser/Thr_kinase_AS"/>
</dbReference>
<dbReference type="PANTHER" id="PTHR24056">
    <property type="entry name" value="CELL DIVISION PROTEIN KINASE"/>
    <property type="match status" value="1"/>
</dbReference>
<dbReference type="PANTHER" id="PTHR24056:SF495">
    <property type="entry name" value="CYCLIN-DEPENDENT KINASE 8-RELATED"/>
    <property type="match status" value="1"/>
</dbReference>
<dbReference type="Pfam" id="PF00069">
    <property type="entry name" value="Pkinase"/>
    <property type="match status" value="1"/>
</dbReference>
<dbReference type="SMART" id="SM00220">
    <property type="entry name" value="S_TKc"/>
    <property type="match status" value="1"/>
</dbReference>
<dbReference type="SUPFAM" id="SSF56112">
    <property type="entry name" value="Protein kinase-like (PK-like)"/>
    <property type="match status" value="1"/>
</dbReference>
<dbReference type="PROSITE" id="PS50011">
    <property type="entry name" value="PROTEIN_KINASE_DOM"/>
    <property type="match status" value="1"/>
</dbReference>
<dbReference type="PROSITE" id="PS00108">
    <property type="entry name" value="PROTEIN_KINASE_ST"/>
    <property type="match status" value="1"/>
</dbReference>
<comment type="function">
    <text evidence="1">Component of the SRB8-11 complex. The SRB8-11 complex is a regulatory module of the Mediator complex which is itself involved in regulation of basal and activated RNA polymerase II-dependent transcription. The SRB8-11 complex may be involved in the transcriptional repression of a subset of genes regulated by Mediator. It may inhibit the association of the Mediator complex with RNA polymerase II to form the holoenzyme complex. The SRB8-11 complex phosphorylates the C-terminal domain (CTD) of the largest subunit of RNA polymerase II (By similarity).</text>
</comment>
<comment type="catalytic activity">
    <reaction>
        <text>L-seryl-[protein] + ATP = O-phospho-L-seryl-[protein] + ADP + H(+)</text>
        <dbReference type="Rhea" id="RHEA:17989"/>
        <dbReference type="Rhea" id="RHEA-COMP:9863"/>
        <dbReference type="Rhea" id="RHEA-COMP:11604"/>
        <dbReference type="ChEBI" id="CHEBI:15378"/>
        <dbReference type="ChEBI" id="CHEBI:29999"/>
        <dbReference type="ChEBI" id="CHEBI:30616"/>
        <dbReference type="ChEBI" id="CHEBI:83421"/>
        <dbReference type="ChEBI" id="CHEBI:456216"/>
        <dbReference type="EC" id="2.7.11.22"/>
    </reaction>
</comment>
<comment type="catalytic activity">
    <reaction>
        <text>L-threonyl-[protein] + ATP = O-phospho-L-threonyl-[protein] + ADP + H(+)</text>
        <dbReference type="Rhea" id="RHEA:46608"/>
        <dbReference type="Rhea" id="RHEA-COMP:11060"/>
        <dbReference type="Rhea" id="RHEA-COMP:11605"/>
        <dbReference type="ChEBI" id="CHEBI:15378"/>
        <dbReference type="ChEBI" id="CHEBI:30013"/>
        <dbReference type="ChEBI" id="CHEBI:30616"/>
        <dbReference type="ChEBI" id="CHEBI:61977"/>
        <dbReference type="ChEBI" id="CHEBI:456216"/>
        <dbReference type="EC" id="2.7.11.22"/>
    </reaction>
</comment>
<comment type="catalytic activity">
    <reaction>
        <text>[DNA-directed RNA polymerase] + ATP = phospho-[DNA-directed RNA polymerase] + ADP + H(+)</text>
        <dbReference type="Rhea" id="RHEA:10216"/>
        <dbReference type="Rhea" id="RHEA-COMP:11321"/>
        <dbReference type="Rhea" id="RHEA-COMP:11322"/>
        <dbReference type="ChEBI" id="CHEBI:15378"/>
        <dbReference type="ChEBI" id="CHEBI:30616"/>
        <dbReference type="ChEBI" id="CHEBI:43176"/>
        <dbReference type="ChEBI" id="CHEBI:68546"/>
        <dbReference type="ChEBI" id="CHEBI:456216"/>
        <dbReference type="EC" id="2.7.11.23"/>
    </reaction>
</comment>
<comment type="cofactor">
    <cofactor evidence="1">
        <name>Mg(2+)</name>
        <dbReference type="ChEBI" id="CHEBI:18420"/>
    </cofactor>
</comment>
<comment type="subunit">
    <text evidence="1">Component of the SRB8-11 complex, a regulatory module of the Mediator complex.</text>
</comment>
<comment type="subcellular location">
    <subcellularLocation>
        <location evidence="5">Nucleus</location>
    </subcellularLocation>
</comment>
<comment type="similarity">
    <text evidence="5">Belongs to the protein kinase superfamily. CMGC Ser/Thr protein kinase family. CDC2/CDKX subfamily.</text>
</comment>
<organism>
    <name type="scientific">Cryptococcus neoformans var. neoformans serotype D (strain B-3501A)</name>
    <name type="common">Filobasidiella neoformans</name>
    <dbReference type="NCBI Taxonomy" id="283643"/>
    <lineage>
        <taxon>Eukaryota</taxon>
        <taxon>Fungi</taxon>
        <taxon>Dikarya</taxon>
        <taxon>Basidiomycota</taxon>
        <taxon>Agaricomycotina</taxon>
        <taxon>Tremellomycetes</taxon>
        <taxon>Tremellales</taxon>
        <taxon>Cryptococcaceae</taxon>
        <taxon>Cryptococcus</taxon>
        <taxon>Cryptococcus neoformans species complex</taxon>
    </lineage>
</organism>
<feature type="chain" id="PRO_0000410191" description="Serine/threonine-protein kinase SSN3">
    <location>
        <begin position="1"/>
        <end position="466"/>
    </location>
</feature>
<feature type="domain" description="Protein kinase" evidence="2">
    <location>
        <begin position="32"/>
        <end position="396"/>
    </location>
</feature>
<feature type="region of interest" description="Disordered" evidence="4">
    <location>
        <begin position="58"/>
        <end position="105"/>
    </location>
</feature>
<feature type="region of interest" description="Disordered" evidence="4">
    <location>
        <begin position="421"/>
        <end position="466"/>
    </location>
</feature>
<feature type="active site" description="Proton acceptor" evidence="2 3">
    <location>
        <position position="216"/>
    </location>
</feature>
<feature type="binding site" evidence="2">
    <location>
        <begin position="38"/>
        <end position="46"/>
    </location>
    <ligand>
        <name>ATP</name>
        <dbReference type="ChEBI" id="CHEBI:30616"/>
    </ligand>
</feature>
<feature type="binding site" evidence="2">
    <location>
        <position position="114"/>
    </location>
    <ligand>
        <name>ATP</name>
        <dbReference type="ChEBI" id="CHEBI:30616"/>
    </ligand>
</feature>
<accession>P0CS77</accession>
<accession>Q55ID8</accession>
<accession>Q5K7X7</accession>
<sequence>MATIPGGGTIMDPMHLYRARRDKERRGVLKTYKILGFISSGTYGRVYKAVLLPPPKTASAKSALPSSTRAALSLPKDKLPSPSFTEDSDPLNNPEMCMRPGDRPAKRGDVFAIKKFKPDKEGDVLTYAGISQSGAREIMLNRELHHRNLVSLREVILEDKSIYMVFEYAEHDFLQIIHYHSQTARASIPPSTLRRLLHQLLCGVHFLHSNFVLHRDLKPANILVTSQGVVKIGDLGLARLWHKPLAQQGLYGGDKVVVTIWYRAPELILGAKHYTAAVDIWAVGCIYAELLSLRPIFKGDEAKMDGKKSLPFQRDQMGKICEVLGPVKPEQWPGIVHMPEYRTYQATGPYPHSNPLAPWYHARSNSSEGYDILVKMFEWDPARRITARDALRHPWFQEEGGVDTKSVFEGSSITYPTRRVTHEDNGDAKMGSLPQSMAGGRLPSSSNFRPASGNIVQPAARKKARI</sequence>